<evidence type="ECO:0000255" key="1">
    <source>
        <dbReference type="HAMAP-Rule" id="MF_01007"/>
    </source>
</evidence>
<evidence type="ECO:0000256" key="2">
    <source>
        <dbReference type="SAM" id="MobiDB-lite"/>
    </source>
</evidence>
<proteinExistence type="inferred from homology"/>
<sequence>MEPVHYSVQGNNILQIFMENFHKEDPVLFLDGTAGEGGHSLLFLKGFPNSKVILCDRDPVMLSRALARLVDFKERVVSIQTNFSEIDSNLLSSHGINDSPQGILLDLGISTFHLFHSGRGFSFKEAEPLDMRLTPNIGINAEDVINTYSKDRLMHIFYTYGEERWSKKIAEVIVERRKQNLISYTSELADLISKIIPRKLWPPGRHPATRIFQALRIEVNQELTHIEKGLDSLLNLLRPEGVIQVISFHSLEDRIVKNSLRNYAKQNGFELLTKKPILPSEEETKENPASRSAKLRVLRKTKSADKKYKKENSKEE</sequence>
<dbReference type="EC" id="2.1.1.199" evidence="1"/>
<dbReference type="EMBL" id="CP000350">
    <property type="protein sequence ID" value="ABJ75181.1"/>
    <property type="molecule type" value="Genomic_DNA"/>
</dbReference>
<dbReference type="SMR" id="Q04V89"/>
<dbReference type="KEGG" id="lbj:LBJ_0481"/>
<dbReference type="HOGENOM" id="CLU_038422_2_0_12"/>
<dbReference type="Proteomes" id="UP000000656">
    <property type="component" value="Chromosome 1"/>
</dbReference>
<dbReference type="GO" id="GO:0005737">
    <property type="term" value="C:cytoplasm"/>
    <property type="evidence" value="ECO:0007669"/>
    <property type="project" value="UniProtKB-SubCell"/>
</dbReference>
<dbReference type="GO" id="GO:0071424">
    <property type="term" value="F:rRNA (cytosine-N4-)-methyltransferase activity"/>
    <property type="evidence" value="ECO:0007669"/>
    <property type="project" value="UniProtKB-UniRule"/>
</dbReference>
<dbReference type="GO" id="GO:0070475">
    <property type="term" value="P:rRNA base methylation"/>
    <property type="evidence" value="ECO:0007669"/>
    <property type="project" value="UniProtKB-UniRule"/>
</dbReference>
<dbReference type="Gene3D" id="1.10.150.170">
    <property type="entry name" value="Putative methyltransferase TM0872, insert domain"/>
    <property type="match status" value="1"/>
</dbReference>
<dbReference type="Gene3D" id="3.40.50.150">
    <property type="entry name" value="Vaccinia Virus protein VP39"/>
    <property type="match status" value="1"/>
</dbReference>
<dbReference type="HAMAP" id="MF_01007">
    <property type="entry name" value="16SrRNA_methyltr_H"/>
    <property type="match status" value="1"/>
</dbReference>
<dbReference type="InterPro" id="IPR002903">
    <property type="entry name" value="RsmH"/>
</dbReference>
<dbReference type="InterPro" id="IPR023397">
    <property type="entry name" value="SAM-dep_MeTrfase_MraW_recog"/>
</dbReference>
<dbReference type="InterPro" id="IPR029063">
    <property type="entry name" value="SAM-dependent_MTases_sf"/>
</dbReference>
<dbReference type="NCBIfam" id="TIGR00006">
    <property type="entry name" value="16S rRNA (cytosine(1402)-N(4))-methyltransferase RsmH"/>
    <property type="match status" value="1"/>
</dbReference>
<dbReference type="PANTHER" id="PTHR11265:SF0">
    <property type="entry name" value="12S RRNA N4-METHYLCYTIDINE METHYLTRANSFERASE"/>
    <property type="match status" value="1"/>
</dbReference>
<dbReference type="PANTHER" id="PTHR11265">
    <property type="entry name" value="S-ADENOSYL-METHYLTRANSFERASE MRAW"/>
    <property type="match status" value="1"/>
</dbReference>
<dbReference type="Pfam" id="PF01795">
    <property type="entry name" value="Methyltransf_5"/>
    <property type="match status" value="1"/>
</dbReference>
<dbReference type="PIRSF" id="PIRSF004486">
    <property type="entry name" value="MraW"/>
    <property type="match status" value="1"/>
</dbReference>
<dbReference type="SUPFAM" id="SSF81799">
    <property type="entry name" value="Putative methyltransferase TM0872, insert domain"/>
    <property type="match status" value="1"/>
</dbReference>
<dbReference type="SUPFAM" id="SSF53335">
    <property type="entry name" value="S-adenosyl-L-methionine-dependent methyltransferases"/>
    <property type="match status" value="1"/>
</dbReference>
<reference key="1">
    <citation type="journal article" date="2006" name="Proc. Natl. Acad. Sci. U.S.A.">
        <title>Genome reduction in Leptospira borgpetersenii reflects limited transmission potential.</title>
        <authorList>
            <person name="Bulach D.M."/>
            <person name="Zuerner R.L."/>
            <person name="Wilson P."/>
            <person name="Seemann T."/>
            <person name="McGrath A."/>
            <person name="Cullen P.A."/>
            <person name="Davis J."/>
            <person name="Johnson M."/>
            <person name="Kuczek E."/>
            <person name="Alt D.P."/>
            <person name="Peterson-Burch B."/>
            <person name="Coppel R.L."/>
            <person name="Rood J.I."/>
            <person name="Davies J.K."/>
            <person name="Adler B."/>
        </authorList>
    </citation>
    <scope>NUCLEOTIDE SEQUENCE [LARGE SCALE GENOMIC DNA]</scope>
    <source>
        <strain>JB197</strain>
    </source>
</reference>
<gene>
    <name evidence="1" type="primary">rsmH</name>
    <name type="synonym">mraW</name>
    <name type="ordered locus">LBJ_0481</name>
</gene>
<comment type="function">
    <text evidence="1">Specifically methylates the N4 position of cytidine in position 1402 (C1402) of 16S rRNA.</text>
</comment>
<comment type="catalytic activity">
    <reaction evidence="1">
        <text>cytidine(1402) in 16S rRNA + S-adenosyl-L-methionine = N(4)-methylcytidine(1402) in 16S rRNA + S-adenosyl-L-homocysteine + H(+)</text>
        <dbReference type="Rhea" id="RHEA:42928"/>
        <dbReference type="Rhea" id="RHEA-COMP:10286"/>
        <dbReference type="Rhea" id="RHEA-COMP:10287"/>
        <dbReference type="ChEBI" id="CHEBI:15378"/>
        <dbReference type="ChEBI" id="CHEBI:57856"/>
        <dbReference type="ChEBI" id="CHEBI:59789"/>
        <dbReference type="ChEBI" id="CHEBI:74506"/>
        <dbReference type="ChEBI" id="CHEBI:82748"/>
        <dbReference type="EC" id="2.1.1.199"/>
    </reaction>
</comment>
<comment type="subcellular location">
    <subcellularLocation>
        <location evidence="1">Cytoplasm</location>
    </subcellularLocation>
</comment>
<comment type="similarity">
    <text evidence="1">Belongs to the methyltransferase superfamily. RsmH family.</text>
</comment>
<organism>
    <name type="scientific">Leptospira borgpetersenii serovar Hardjo-bovis (strain JB197)</name>
    <dbReference type="NCBI Taxonomy" id="355277"/>
    <lineage>
        <taxon>Bacteria</taxon>
        <taxon>Pseudomonadati</taxon>
        <taxon>Spirochaetota</taxon>
        <taxon>Spirochaetia</taxon>
        <taxon>Leptospirales</taxon>
        <taxon>Leptospiraceae</taxon>
        <taxon>Leptospira</taxon>
    </lineage>
</organism>
<feature type="chain" id="PRO_0000386956" description="Ribosomal RNA small subunit methyltransferase H">
    <location>
        <begin position="1"/>
        <end position="316"/>
    </location>
</feature>
<feature type="region of interest" description="Disordered" evidence="2">
    <location>
        <begin position="276"/>
        <end position="316"/>
    </location>
</feature>
<feature type="compositionally biased region" description="Basic and acidic residues" evidence="2">
    <location>
        <begin position="302"/>
        <end position="316"/>
    </location>
</feature>
<feature type="binding site" evidence="1">
    <location>
        <begin position="37"/>
        <end position="39"/>
    </location>
    <ligand>
        <name>S-adenosyl-L-methionine</name>
        <dbReference type="ChEBI" id="CHEBI:59789"/>
    </ligand>
</feature>
<feature type="binding site" evidence="1">
    <location>
        <position position="56"/>
    </location>
    <ligand>
        <name>S-adenosyl-L-methionine</name>
        <dbReference type="ChEBI" id="CHEBI:59789"/>
    </ligand>
</feature>
<feature type="binding site" evidence="1">
    <location>
        <position position="83"/>
    </location>
    <ligand>
        <name>S-adenosyl-L-methionine</name>
        <dbReference type="ChEBI" id="CHEBI:59789"/>
    </ligand>
</feature>
<feature type="binding site" evidence="1">
    <location>
        <position position="106"/>
    </location>
    <ligand>
        <name>S-adenosyl-L-methionine</name>
        <dbReference type="ChEBI" id="CHEBI:59789"/>
    </ligand>
</feature>
<feature type="binding site" evidence="1">
    <location>
        <position position="113"/>
    </location>
    <ligand>
        <name>S-adenosyl-L-methionine</name>
        <dbReference type="ChEBI" id="CHEBI:59789"/>
    </ligand>
</feature>
<name>RSMH_LEPBJ</name>
<protein>
    <recommendedName>
        <fullName evidence="1">Ribosomal RNA small subunit methyltransferase H</fullName>
        <ecNumber evidence="1">2.1.1.199</ecNumber>
    </recommendedName>
    <alternativeName>
        <fullName evidence="1">16S rRNA m(4)C1402 methyltransferase</fullName>
    </alternativeName>
    <alternativeName>
        <fullName evidence="1">rRNA (cytosine-N(4)-)-methyltransferase RsmH</fullName>
    </alternativeName>
</protein>
<accession>Q04V89</accession>
<keyword id="KW-0963">Cytoplasm</keyword>
<keyword id="KW-0489">Methyltransferase</keyword>
<keyword id="KW-0698">rRNA processing</keyword>
<keyword id="KW-0949">S-adenosyl-L-methionine</keyword>
<keyword id="KW-0808">Transferase</keyword>